<comment type="function">
    <text evidence="1">Essential for viral fusion with host endosomal membrane and core release.</text>
</comment>
<comment type="subunit">
    <text evidence="1">Interacts with A151R.</text>
</comment>
<comment type="subcellular location">
    <subcellularLocation>
        <location evidence="1">Host membrane</location>
        <topology evidence="1">Single-pass type II membrane protein</topology>
    </subcellularLocation>
    <subcellularLocation>
        <location evidence="1">Virion membrane</location>
    </subcellularLocation>
    <text evidence="1">Probably part of the virion inner membrane.</text>
</comment>
<comment type="similarity">
    <text evidence="3">Belongs to the asfivirus E248R family.</text>
</comment>
<gene>
    <name type="ordered locus">Pret-144</name>
</gene>
<accession>P0CAB1</accession>
<organismHost>
    <name type="scientific">Ornithodoros</name>
    <name type="common">relapsing fever ticks</name>
    <dbReference type="NCBI Taxonomy" id="6937"/>
</organismHost>
<organismHost>
    <name type="scientific">Phacochoerus aethiopicus</name>
    <name type="common">Warthog</name>
    <dbReference type="NCBI Taxonomy" id="85517"/>
</organismHost>
<organismHost>
    <name type="scientific">Phacochoerus africanus</name>
    <name type="common">Warthog</name>
    <dbReference type="NCBI Taxonomy" id="41426"/>
</organismHost>
<organismHost>
    <name type="scientific">Potamochoerus larvatus</name>
    <name type="common">Bushpig</name>
    <dbReference type="NCBI Taxonomy" id="273792"/>
</organismHost>
<organismHost>
    <name type="scientific">Sus scrofa</name>
    <name type="common">Pig</name>
    <dbReference type="NCBI Taxonomy" id="9823"/>
</organismHost>
<feature type="initiator methionine" description="Removed" evidence="2">
    <location>
        <position position="1"/>
    </location>
</feature>
<feature type="chain" id="PRO_0000373607" description="Inner membrane protein pE248R">
    <location>
        <begin position="2"/>
        <end position="248"/>
    </location>
</feature>
<feature type="topological domain" description="Cytoplasmic" evidence="1">
    <location>
        <begin position="2"/>
        <end position="199"/>
    </location>
</feature>
<feature type="transmembrane region" description="Helical" evidence="2">
    <location>
        <begin position="200"/>
        <end position="220"/>
    </location>
</feature>
<feature type="topological domain" description="Extracellular" evidence="1">
    <location>
        <begin position="221"/>
        <end position="248"/>
    </location>
</feature>
<feature type="lipid moiety-binding region" description="N-myristoyl glycine; by host" evidence="1">
    <location>
        <position position="2"/>
    </location>
</feature>
<name>E248R_ASFP4</name>
<reference key="1">
    <citation type="submission" date="2003-03" db="EMBL/GenBank/DDBJ databases">
        <title>African swine fever virus genomes.</title>
        <authorList>
            <person name="Kutish G.F."/>
            <person name="Rock D.L."/>
        </authorList>
    </citation>
    <scope>NUCLEOTIDE SEQUENCE [LARGE SCALE GENOMIC DNA]</scope>
</reference>
<evidence type="ECO:0000250" key="1">
    <source>
        <dbReference type="UniProtKB" id="Q65200"/>
    </source>
</evidence>
<evidence type="ECO:0000255" key="2"/>
<evidence type="ECO:0000305" key="3"/>
<sequence>MGGSTSKNSFKNTTNIISNSIFNQMQSCISMLDGKNYIGVFGDGNILNHVFQDLNLSLNTSCVQKHVNEENFITNLSNQITQNLKDQEVALTQWMDAGTHDQKTDIEENIKVNLTTTLIQNCVSSLSGMNVLVVKGNGNIVENATQKQSQQIISNCLQGSKQAIDTTTGITNTVNQYSHYTSKNFFDFIADAISAVFKNIMVAAVVIVLIIVGFIAVFYFLHSRHRHEEEEEAEPLISNKVLKNAAVS</sequence>
<keyword id="KW-1231">Capsid inner membrane protein</keyword>
<keyword id="KW-1043">Host membrane</keyword>
<keyword id="KW-0449">Lipoprotein</keyword>
<keyword id="KW-0472">Membrane</keyword>
<keyword id="KW-0519">Myristate</keyword>
<keyword id="KW-0735">Signal-anchor</keyword>
<keyword id="KW-0812">Transmembrane</keyword>
<keyword id="KW-1133">Transmembrane helix</keyword>
<keyword id="KW-0946">Virion</keyword>
<organism>
    <name type="scientific">African swine fever virus (isolate Tick/South Africa/Pretoriuskop Pr4/1996)</name>
    <name type="common">ASFV</name>
    <dbReference type="NCBI Taxonomy" id="561443"/>
    <lineage>
        <taxon>Viruses</taxon>
        <taxon>Varidnaviria</taxon>
        <taxon>Bamfordvirae</taxon>
        <taxon>Nucleocytoviricota</taxon>
        <taxon>Pokkesviricetes</taxon>
        <taxon>Asfuvirales</taxon>
        <taxon>Asfarviridae</taxon>
        <taxon>Asfivirus</taxon>
        <taxon>African swine fever virus</taxon>
    </lineage>
</organism>
<proteinExistence type="inferred from homology"/>
<protein>
    <recommendedName>
        <fullName>Inner membrane protein pE248R</fullName>
        <shortName>pE248R</shortName>
    </recommendedName>
</protein>
<dbReference type="EMBL" id="AY261363">
    <property type="status" value="NOT_ANNOTATED_CDS"/>
    <property type="molecule type" value="Genomic_DNA"/>
</dbReference>
<dbReference type="SMR" id="P0CAB1"/>
<dbReference type="Proteomes" id="UP000000859">
    <property type="component" value="Segment"/>
</dbReference>
<dbReference type="GO" id="GO:0033644">
    <property type="term" value="C:host cell membrane"/>
    <property type="evidence" value="ECO:0007669"/>
    <property type="project" value="UniProtKB-SubCell"/>
</dbReference>
<dbReference type="GO" id="GO:0016020">
    <property type="term" value="C:membrane"/>
    <property type="evidence" value="ECO:0007669"/>
    <property type="project" value="UniProtKB-KW"/>
</dbReference>
<dbReference type="GO" id="GO:0039641">
    <property type="term" value="C:viral inner membrane"/>
    <property type="evidence" value="ECO:0007669"/>
    <property type="project" value="UniProtKB-KW"/>
</dbReference>
<dbReference type="GO" id="GO:0055036">
    <property type="term" value="C:virion membrane"/>
    <property type="evidence" value="ECO:0007669"/>
    <property type="project" value="UniProtKB-SubCell"/>
</dbReference>
<dbReference type="InterPro" id="IPR003472">
    <property type="entry name" value="Virion_mem_poxvirus_L1"/>
</dbReference>
<dbReference type="Pfam" id="PF02442">
    <property type="entry name" value="L1R_F9L"/>
    <property type="match status" value="1"/>
</dbReference>